<gene>
    <name evidence="1" type="primary">glyS</name>
    <name type="ordered locus">EcSMS35_3881</name>
</gene>
<comment type="catalytic activity">
    <reaction evidence="1">
        <text>tRNA(Gly) + glycine + ATP = glycyl-tRNA(Gly) + AMP + diphosphate</text>
        <dbReference type="Rhea" id="RHEA:16013"/>
        <dbReference type="Rhea" id="RHEA-COMP:9664"/>
        <dbReference type="Rhea" id="RHEA-COMP:9683"/>
        <dbReference type="ChEBI" id="CHEBI:30616"/>
        <dbReference type="ChEBI" id="CHEBI:33019"/>
        <dbReference type="ChEBI" id="CHEBI:57305"/>
        <dbReference type="ChEBI" id="CHEBI:78442"/>
        <dbReference type="ChEBI" id="CHEBI:78522"/>
        <dbReference type="ChEBI" id="CHEBI:456215"/>
        <dbReference type="EC" id="6.1.1.14"/>
    </reaction>
</comment>
<comment type="subunit">
    <text evidence="1">Tetramer of two alpha and two beta subunits.</text>
</comment>
<comment type="subcellular location">
    <subcellularLocation>
        <location evidence="1">Cytoplasm</location>
    </subcellularLocation>
</comment>
<comment type="similarity">
    <text evidence="1">Belongs to the class-II aminoacyl-tRNA synthetase family.</text>
</comment>
<evidence type="ECO:0000255" key="1">
    <source>
        <dbReference type="HAMAP-Rule" id="MF_00255"/>
    </source>
</evidence>
<protein>
    <recommendedName>
        <fullName evidence="1">Glycine--tRNA ligase beta subunit</fullName>
        <ecNumber evidence="1">6.1.1.14</ecNumber>
    </recommendedName>
    <alternativeName>
        <fullName evidence="1">Glycyl-tRNA synthetase beta subunit</fullName>
        <shortName evidence="1">GlyRS</shortName>
    </alternativeName>
</protein>
<organism>
    <name type="scientific">Escherichia coli (strain SMS-3-5 / SECEC)</name>
    <dbReference type="NCBI Taxonomy" id="439855"/>
    <lineage>
        <taxon>Bacteria</taxon>
        <taxon>Pseudomonadati</taxon>
        <taxon>Pseudomonadota</taxon>
        <taxon>Gammaproteobacteria</taxon>
        <taxon>Enterobacterales</taxon>
        <taxon>Enterobacteriaceae</taxon>
        <taxon>Escherichia</taxon>
    </lineage>
</organism>
<sequence>MSEKTFLVEIGTEELPPKALRSLAESFAANFTAELDNAGLAHGTVQWFAAPRRLALKVANLAEAQPDREIEKRGPAIAQAFDAEGKPSKAAEGWARGCGITVDQAERLTTDKGEWLLYRAHVKGESTEALLPNMVATSLAKLPIPKLMRWGASDVHFVRPVHTVTLLLGDKVIPATILGIQSDRVIRGHRFMGESEFTIDNADQYPEILRERGKVIADYEERKAKIKADAEEAARKIGGNADLSESLLEEVASLVEWPVVLTAKFEEKFLAVPSEALVYTMKGDQKYFPVYANDGKLLPNFIFVANIESKDPQQIISGNEKVVRPRLADAEFFFNTDRKKRLEDNLPRLQTVLFQQQLGTLRDKTDRIQALAGWIAEQIGADVNHATRAGLLSKCDLMTNMVFEFTDTQGVMGMHYARHDGEAEDVAVALNEQYQPRFAGDDLPSNPVACALAIADKMDTLAGIFGIGQHPKGDKDPFALRRAALGVLRIIVEKNLNLDLQTLTEEAVRLYGDKLTNANVVDDVIDFMLGRFRAWYQDEGYTVDTIQAVLARRPTRPADFDARMKAVSHFRTLDAAAALAAANKRVSNILAKSDEVLSDRVNASTLKEPEEIKLAMQVVVLRDKLEPYFAEGRYQDALVELAELREPVDAFFDKVMVMVDDKELRINRLTMLEKLRELFLRVADISLLQ</sequence>
<accession>B1LJC0</accession>
<proteinExistence type="inferred from homology"/>
<reference key="1">
    <citation type="journal article" date="2008" name="J. Bacteriol.">
        <title>Insights into the environmental resistance gene pool from the genome sequence of the multidrug-resistant environmental isolate Escherichia coli SMS-3-5.</title>
        <authorList>
            <person name="Fricke W.F."/>
            <person name="Wright M.S."/>
            <person name="Lindell A.H."/>
            <person name="Harkins D.M."/>
            <person name="Baker-Austin C."/>
            <person name="Ravel J."/>
            <person name="Stepanauskas R."/>
        </authorList>
    </citation>
    <scope>NUCLEOTIDE SEQUENCE [LARGE SCALE GENOMIC DNA]</scope>
    <source>
        <strain>SMS-3-5 / SECEC</strain>
    </source>
</reference>
<dbReference type="EC" id="6.1.1.14" evidence="1"/>
<dbReference type="EMBL" id="CP000970">
    <property type="protein sequence ID" value="ACB18836.1"/>
    <property type="molecule type" value="Genomic_DNA"/>
</dbReference>
<dbReference type="RefSeq" id="WP_001291797.1">
    <property type="nucleotide sequence ID" value="NC_010498.1"/>
</dbReference>
<dbReference type="SMR" id="B1LJC0"/>
<dbReference type="KEGG" id="ecm:EcSMS35_3881"/>
<dbReference type="HOGENOM" id="CLU_007220_2_2_6"/>
<dbReference type="Proteomes" id="UP000007011">
    <property type="component" value="Chromosome"/>
</dbReference>
<dbReference type="GO" id="GO:0005829">
    <property type="term" value="C:cytosol"/>
    <property type="evidence" value="ECO:0007669"/>
    <property type="project" value="TreeGrafter"/>
</dbReference>
<dbReference type="GO" id="GO:0004814">
    <property type="term" value="F:arginine-tRNA ligase activity"/>
    <property type="evidence" value="ECO:0007669"/>
    <property type="project" value="InterPro"/>
</dbReference>
<dbReference type="GO" id="GO:0005524">
    <property type="term" value="F:ATP binding"/>
    <property type="evidence" value="ECO:0007669"/>
    <property type="project" value="UniProtKB-UniRule"/>
</dbReference>
<dbReference type="GO" id="GO:0004820">
    <property type="term" value="F:glycine-tRNA ligase activity"/>
    <property type="evidence" value="ECO:0007669"/>
    <property type="project" value="UniProtKB-UniRule"/>
</dbReference>
<dbReference type="GO" id="GO:0006420">
    <property type="term" value="P:arginyl-tRNA aminoacylation"/>
    <property type="evidence" value="ECO:0007669"/>
    <property type="project" value="InterPro"/>
</dbReference>
<dbReference type="GO" id="GO:0006426">
    <property type="term" value="P:glycyl-tRNA aminoacylation"/>
    <property type="evidence" value="ECO:0007669"/>
    <property type="project" value="UniProtKB-UniRule"/>
</dbReference>
<dbReference type="HAMAP" id="MF_00255">
    <property type="entry name" value="Gly_tRNA_synth_beta"/>
    <property type="match status" value="1"/>
</dbReference>
<dbReference type="InterPro" id="IPR008909">
    <property type="entry name" value="DALR_anticod-bd"/>
</dbReference>
<dbReference type="InterPro" id="IPR015944">
    <property type="entry name" value="Gly-tRNA-synth_bsu"/>
</dbReference>
<dbReference type="InterPro" id="IPR006194">
    <property type="entry name" value="Gly-tRNA-synth_heterodimer"/>
</dbReference>
<dbReference type="NCBIfam" id="TIGR00211">
    <property type="entry name" value="glyS"/>
    <property type="match status" value="1"/>
</dbReference>
<dbReference type="PANTHER" id="PTHR30075:SF2">
    <property type="entry name" value="GLYCINE--TRNA LIGASE, CHLOROPLASTIC_MITOCHONDRIAL 2"/>
    <property type="match status" value="1"/>
</dbReference>
<dbReference type="PANTHER" id="PTHR30075">
    <property type="entry name" value="GLYCYL-TRNA SYNTHETASE"/>
    <property type="match status" value="1"/>
</dbReference>
<dbReference type="Pfam" id="PF05746">
    <property type="entry name" value="DALR_1"/>
    <property type="match status" value="1"/>
</dbReference>
<dbReference type="Pfam" id="PF02092">
    <property type="entry name" value="tRNA_synt_2f"/>
    <property type="match status" value="1"/>
</dbReference>
<dbReference type="PRINTS" id="PR01045">
    <property type="entry name" value="TRNASYNTHGB"/>
</dbReference>
<dbReference type="SUPFAM" id="SSF109604">
    <property type="entry name" value="HD-domain/PDEase-like"/>
    <property type="match status" value="1"/>
</dbReference>
<dbReference type="PROSITE" id="PS50861">
    <property type="entry name" value="AA_TRNA_LIGASE_II_GLYAB"/>
    <property type="match status" value="1"/>
</dbReference>
<keyword id="KW-0030">Aminoacyl-tRNA synthetase</keyword>
<keyword id="KW-0067">ATP-binding</keyword>
<keyword id="KW-0963">Cytoplasm</keyword>
<keyword id="KW-0436">Ligase</keyword>
<keyword id="KW-0547">Nucleotide-binding</keyword>
<keyword id="KW-0648">Protein biosynthesis</keyword>
<name>SYGB_ECOSM</name>
<feature type="chain" id="PRO_1000197188" description="Glycine--tRNA ligase beta subunit">
    <location>
        <begin position="1"/>
        <end position="689"/>
    </location>
</feature>